<sequence>MSKQDVIEFDGEVIETLPNTMFKVRLENGHEILAHISGRMRKNYIRILAGDKVKVELTPYDLTKGRITYRGK</sequence>
<evidence type="ECO:0000255" key="1">
    <source>
        <dbReference type="HAMAP-Rule" id="MF_00075"/>
    </source>
</evidence>
<proteinExistence type="inferred from homology"/>
<organism>
    <name type="scientific">Hydrogenovibrio crunogenus (strain DSM 25203 / XCL-2)</name>
    <name type="common">Thiomicrospira crunogena</name>
    <dbReference type="NCBI Taxonomy" id="317025"/>
    <lineage>
        <taxon>Bacteria</taxon>
        <taxon>Pseudomonadati</taxon>
        <taxon>Pseudomonadota</taxon>
        <taxon>Gammaproteobacteria</taxon>
        <taxon>Thiotrichales</taxon>
        <taxon>Piscirickettsiaceae</taxon>
        <taxon>Hydrogenovibrio</taxon>
    </lineage>
</organism>
<accession>Q31GL5</accession>
<dbReference type="EMBL" id="CP000109">
    <property type="protein sequence ID" value="ABB41708.1"/>
    <property type="molecule type" value="Genomic_DNA"/>
</dbReference>
<dbReference type="SMR" id="Q31GL5"/>
<dbReference type="STRING" id="317025.Tcr_1113"/>
<dbReference type="KEGG" id="tcx:Tcr_1113"/>
<dbReference type="eggNOG" id="COG0361">
    <property type="taxonomic scope" value="Bacteria"/>
</dbReference>
<dbReference type="HOGENOM" id="CLU_151267_1_0_6"/>
<dbReference type="OrthoDB" id="9803250at2"/>
<dbReference type="GO" id="GO:0005829">
    <property type="term" value="C:cytosol"/>
    <property type="evidence" value="ECO:0007669"/>
    <property type="project" value="TreeGrafter"/>
</dbReference>
<dbReference type="GO" id="GO:0043022">
    <property type="term" value="F:ribosome binding"/>
    <property type="evidence" value="ECO:0007669"/>
    <property type="project" value="UniProtKB-UniRule"/>
</dbReference>
<dbReference type="GO" id="GO:0019843">
    <property type="term" value="F:rRNA binding"/>
    <property type="evidence" value="ECO:0007669"/>
    <property type="project" value="UniProtKB-UniRule"/>
</dbReference>
<dbReference type="GO" id="GO:0003743">
    <property type="term" value="F:translation initiation factor activity"/>
    <property type="evidence" value="ECO:0007669"/>
    <property type="project" value="UniProtKB-UniRule"/>
</dbReference>
<dbReference type="CDD" id="cd04451">
    <property type="entry name" value="S1_IF1"/>
    <property type="match status" value="1"/>
</dbReference>
<dbReference type="FunFam" id="2.40.50.140:FF:000002">
    <property type="entry name" value="Translation initiation factor IF-1"/>
    <property type="match status" value="1"/>
</dbReference>
<dbReference type="Gene3D" id="2.40.50.140">
    <property type="entry name" value="Nucleic acid-binding proteins"/>
    <property type="match status" value="1"/>
</dbReference>
<dbReference type="HAMAP" id="MF_00075">
    <property type="entry name" value="IF_1"/>
    <property type="match status" value="1"/>
</dbReference>
<dbReference type="InterPro" id="IPR012340">
    <property type="entry name" value="NA-bd_OB-fold"/>
</dbReference>
<dbReference type="InterPro" id="IPR006196">
    <property type="entry name" value="RNA-binding_domain_S1_IF1"/>
</dbReference>
<dbReference type="InterPro" id="IPR003029">
    <property type="entry name" value="S1_domain"/>
</dbReference>
<dbReference type="InterPro" id="IPR004368">
    <property type="entry name" value="TIF_IF1"/>
</dbReference>
<dbReference type="NCBIfam" id="TIGR00008">
    <property type="entry name" value="infA"/>
    <property type="match status" value="1"/>
</dbReference>
<dbReference type="PANTHER" id="PTHR33370">
    <property type="entry name" value="TRANSLATION INITIATION FACTOR IF-1, CHLOROPLASTIC"/>
    <property type="match status" value="1"/>
</dbReference>
<dbReference type="PANTHER" id="PTHR33370:SF1">
    <property type="entry name" value="TRANSLATION INITIATION FACTOR IF-1, CHLOROPLASTIC"/>
    <property type="match status" value="1"/>
</dbReference>
<dbReference type="Pfam" id="PF01176">
    <property type="entry name" value="eIF-1a"/>
    <property type="match status" value="1"/>
</dbReference>
<dbReference type="SMART" id="SM00316">
    <property type="entry name" value="S1"/>
    <property type="match status" value="1"/>
</dbReference>
<dbReference type="SUPFAM" id="SSF50249">
    <property type="entry name" value="Nucleic acid-binding proteins"/>
    <property type="match status" value="1"/>
</dbReference>
<dbReference type="PROSITE" id="PS50832">
    <property type="entry name" value="S1_IF1_TYPE"/>
    <property type="match status" value="1"/>
</dbReference>
<name>IF1_HYDCU</name>
<gene>
    <name evidence="1" type="primary">infA</name>
    <name type="ordered locus">Tcr_1113</name>
</gene>
<reference key="1">
    <citation type="journal article" date="2006" name="PLoS Biol.">
        <title>The genome of deep-sea vent chemolithoautotroph Thiomicrospira crunogena XCL-2.</title>
        <authorList>
            <person name="Scott K.M."/>
            <person name="Sievert S.M."/>
            <person name="Abril F.N."/>
            <person name="Ball L.A."/>
            <person name="Barrett C.J."/>
            <person name="Blake R.A."/>
            <person name="Boller A.J."/>
            <person name="Chain P.S.G."/>
            <person name="Clark J.A."/>
            <person name="Davis C.R."/>
            <person name="Detter C."/>
            <person name="Do K.F."/>
            <person name="Dobrinski K.P."/>
            <person name="Faza B.I."/>
            <person name="Fitzpatrick K.A."/>
            <person name="Freyermuth S.K."/>
            <person name="Harmer T.L."/>
            <person name="Hauser L.J."/>
            <person name="Huegler M."/>
            <person name="Kerfeld C.A."/>
            <person name="Klotz M.G."/>
            <person name="Kong W.W."/>
            <person name="Land M."/>
            <person name="Lapidus A."/>
            <person name="Larimer F.W."/>
            <person name="Longo D.L."/>
            <person name="Lucas S."/>
            <person name="Malfatti S.A."/>
            <person name="Massey S.E."/>
            <person name="Martin D.D."/>
            <person name="McCuddin Z."/>
            <person name="Meyer F."/>
            <person name="Moore J.L."/>
            <person name="Ocampo L.H. Jr."/>
            <person name="Paul J.H."/>
            <person name="Paulsen I.T."/>
            <person name="Reep D.K."/>
            <person name="Ren Q."/>
            <person name="Ross R.L."/>
            <person name="Sato P.Y."/>
            <person name="Thomas P."/>
            <person name="Tinkham L.E."/>
            <person name="Zeruth G.T."/>
        </authorList>
    </citation>
    <scope>NUCLEOTIDE SEQUENCE [LARGE SCALE GENOMIC DNA]</scope>
    <source>
        <strain>DSM 25203 / XCL-2</strain>
    </source>
</reference>
<keyword id="KW-0963">Cytoplasm</keyword>
<keyword id="KW-0396">Initiation factor</keyword>
<keyword id="KW-0648">Protein biosynthesis</keyword>
<keyword id="KW-0694">RNA-binding</keyword>
<keyword id="KW-0699">rRNA-binding</keyword>
<feature type="chain" id="PRO_0000263894" description="Translation initiation factor IF-1">
    <location>
        <begin position="1"/>
        <end position="72"/>
    </location>
</feature>
<feature type="domain" description="S1-like" evidence="1">
    <location>
        <begin position="1"/>
        <end position="72"/>
    </location>
</feature>
<comment type="function">
    <text evidence="1">One of the essential components for the initiation of protein synthesis. Stabilizes the binding of IF-2 and IF-3 on the 30S subunit to which N-formylmethionyl-tRNA(fMet) subsequently binds. Helps modulate mRNA selection, yielding the 30S pre-initiation complex (PIC). Upon addition of the 50S ribosomal subunit IF-1, IF-2 and IF-3 are released leaving the mature 70S translation initiation complex.</text>
</comment>
<comment type="subunit">
    <text evidence="1">Component of the 30S ribosomal translation pre-initiation complex which assembles on the 30S ribosome in the order IF-2 and IF-3, IF-1 and N-formylmethionyl-tRNA(fMet); mRNA recruitment can occur at any time during PIC assembly.</text>
</comment>
<comment type="subcellular location">
    <subcellularLocation>
        <location evidence="1">Cytoplasm</location>
    </subcellularLocation>
</comment>
<comment type="similarity">
    <text evidence="1">Belongs to the IF-1 family.</text>
</comment>
<protein>
    <recommendedName>
        <fullName evidence="1">Translation initiation factor IF-1</fullName>
    </recommendedName>
</protein>